<dbReference type="EC" id="7.3.2.3" evidence="1"/>
<dbReference type="EMBL" id="AL157959">
    <property type="protein sequence ID" value="CAM08308.1"/>
    <property type="molecule type" value="Genomic_DNA"/>
</dbReference>
<dbReference type="PIR" id="F81875">
    <property type="entry name" value="F81875"/>
</dbReference>
<dbReference type="RefSeq" id="WP_002240448.1">
    <property type="nucleotide sequence ID" value="NC_003116.1"/>
</dbReference>
<dbReference type="SMR" id="Q9JUX4"/>
<dbReference type="EnsemblBacteria" id="CAM08308">
    <property type="protein sequence ID" value="CAM08308"/>
    <property type="gene ID" value="NMA1097"/>
</dbReference>
<dbReference type="GeneID" id="93386292"/>
<dbReference type="KEGG" id="nma:NMA1097"/>
<dbReference type="HOGENOM" id="CLU_000604_1_1_4"/>
<dbReference type="Proteomes" id="UP000000626">
    <property type="component" value="Chromosome"/>
</dbReference>
<dbReference type="GO" id="GO:0043190">
    <property type="term" value="C:ATP-binding cassette (ABC) transporter complex"/>
    <property type="evidence" value="ECO:0007669"/>
    <property type="project" value="InterPro"/>
</dbReference>
<dbReference type="GO" id="GO:0015419">
    <property type="term" value="F:ABC-type sulfate transporter activity"/>
    <property type="evidence" value="ECO:0007669"/>
    <property type="project" value="InterPro"/>
</dbReference>
<dbReference type="GO" id="GO:0102025">
    <property type="term" value="F:ABC-type thiosulfate transporter activity"/>
    <property type="evidence" value="ECO:0007669"/>
    <property type="project" value="RHEA"/>
</dbReference>
<dbReference type="GO" id="GO:0005524">
    <property type="term" value="F:ATP binding"/>
    <property type="evidence" value="ECO:0007669"/>
    <property type="project" value="UniProtKB-KW"/>
</dbReference>
<dbReference type="GO" id="GO:0016887">
    <property type="term" value="F:ATP hydrolysis activity"/>
    <property type="evidence" value="ECO:0007669"/>
    <property type="project" value="InterPro"/>
</dbReference>
<dbReference type="CDD" id="cd03296">
    <property type="entry name" value="ABC_CysA_sulfate_importer"/>
    <property type="match status" value="1"/>
</dbReference>
<dbReference type="FunFam" id="3.40.50.300:FF:000227">
    <property type="entry name" value="Sulfate/thiosulfate import ATP-binding protein CysA"/>
    <property type="match status" value="1"/>
</dbReference>
<dbReference type="Gene3D" id="3.40.50.300">
    <property type="entry name" value="P-loop containing nucleotide triphosphate hydrolases"/>
    <property type="match status" value="1"/>
</dbReference>
<dbReference type="InterPro" id="IPR003593">
    <property type="entry name" value="AAA+_ATPase"/>
</dbReference>
<dbReference type="InterPro" id="IPR050093">
    <property type="entry name" value="ABC_SmlMolc_Importer"/>
</dbReference>
<dbReference type="InterPro" id="IPR003439">
    <property type="entry name" value="ABC_transporter-like_ATP-bd"/>
</dbReference>
<dbReference type="InterPro" id="IPR017871">
    <property type="entry name" value="ABC_transporter-like_CS"/>
</dbReference>
<dbReference type="InterPro" id="IPR041193">
    <property type="entry name" value="CysA_C"/>
</dbReference>
<dbReference type="InterPro" id="IPR008995">
    <property type="entry name" value="Mo/tungstate-bd_C_term_dom"/>
</dbReference>
<dbReference type="InterPro" id="IPR027417">
    <property type="entry name" value="P-loop_NTPase"/>
</dbReference>
<dbReference type="InterPro" id="IPR005666">
    <property type="entry name" value="Sulph_transpt1"/>
</dbReference>
<dbReference type="NCBIfam" id="TIGR00968">
    <property type="entry name" value="3a0106s01"/>
    <property type="match status" value="1"/>
</dbReference>
<dbReference type="PANTHER" id="PTHR42781">
    <property type="entry name" value="SPERMIDINE/PUTRESCINE IMPORT ATP-BINDING PROTEIN POTA"/>
    <property type="match status" value="1"/>
</dbReference>
<dbReference type="PANTHER" id="PTHR42781:SF4">
    <property type="entry name" value="SPERMIDINE_PUTRESCINE IMPORT ATP-BINDING PROTEIN POTA"/>
    <property type="match status" value="1"/>
</dbReference>
<dbReference type="Pfam" id="PF00005">
    <property type="entry name" value="ABC_tran"/>
    <property type="match status" value="1"/>
</dbReference>
<dbReference type="Pfam" id="PF17850">
    <property type="entry name" value="CysA_C_terminal"/>
    <property type="match status" value="1"/>
</dbReference>
<dbReference type="SMART" id="SM00382">
    <property type="entry name" value="AAA"/>
    <property type="match status" value="1"/>
</dbReference>
<dbReference type="SUPFAM" id="SSF50331">
    <property type="entry name" value="MOP-like"/>
    <property type="match status" value="1"/>
</dbReference>
<dbReference type="SUPFAM" id="SSF52540">
    <property type="entry name" value="P-loop containing nucleoside triphosphate hydrolases"/>
    <property type="match status" value="1"/>
</dbReference>
<dbReference type="PROSITE" id="PS00211">
    <property type="entry name" value="ABC_TRANSPORTER_1"/>
    <property type="match status" value="1"/>
</dbReference>
<dbReference type="PROSITE" id="PS50893">
    <property type="entry name" value="ABC_TRANSPORTER_2"/>
    <property type="match status" value="1"/>
</dbReference>
<dbReference type="PROSITE" id="PS51237">
    <property type="entry name" value="CYSA"/>
    <property type="match status" value="1"/>
</dbReference>
<feature type="chain" id="PRO_0000092277" description="Sulfate/thiosulfate import ATP-binding protein CysA">
    <location>
        <begin position="1"/>
        <end position="357"/>
    </location>
</feature>
<feature type="domain" description="ABC transporter" evidence="1">
    <location>
        <begin position="3"/>
        <end position="237"/>
    </location>
</feature>
<feature type="binding site" evidence="1">
    <location>
        <begin position="35"/>
        <end position="42"/>
    </location>
    <ligand>
        <name>ATP</name>
        <dbReference type="ChEBI" id="CHEBI:30616"/>
    </ligand>
</feature>
<comment type="function">
    <text evidence="1">Part of the ABC transporter complex CysAWTP involved in sulfate/thiosulfate import. Responsible for energy coupling to the transport system.</text>
</comment>
<comment type="catalytic activity">
    <reaction evidence="1">
        <text>sulfate(out) + ATP + H2O = sulfate(in) + ADP + phosphate + H(+)</text>
        <dbReference type="Rhea" id="RHEA:10192"/>
        <dbReference type="ChEBI" id="CHEBI:15377"/>
        <dbReference type="ChEBI" id="CHEBI:15378"/>
        <dbReference type="ChEBI" id="CHEBI:16189"/>
        <dbReference type="ChEBI" id="CHEBI:30616"/>
        <dbReference type="ChEBI" id="CHEBI:43474"/>
        <dbReference type="ChEBI" id="CHEBI:456216"/>
        <dbReference type="EC" id="7.3.2.3"/>
    </reaction>
</comment>
<comment type="catalytic activity">
    <reaction evidence="1">
        <text>thiosulfate(out) + ATP + H2O = thiosulfate(in) + ADP + phosphate + H(+)</text>
        <dbReference type="Rhea" id="RHEA:29871"/>
        <dbReference type="ChEBI" id="CHEBI:15377"/>
        <dbReference type="ChEBI" id="CHEBI:15378"/>
        <dbReference type="ChEBI" id="CHEBI:30616"/>
        <dbReference type="ChEBI" id="CHEBI:33542"/>
        <dbReference type="ChEBI" id="CHEBI:43474"/>
        <dbReference type="ChEBI" id="CHEBI:456216"/>
        <dbReference type="EC" id="7.3.2.3"/>
    </reaction>
</comment>
<comment type="subunit">
    <text evidence="1">The complex is composed of two ATP-binding proteins (CysA), two transmembrane proteins (CysT and CysW) and a solute-binding protein (CysP).</text>
</comment>
<comment type="subcellular location">
    <subcellularLocation>
        <location evidence="1">Cell inner membrane</location>
        <topology evidence="1">Peripheral membrane protein</topology>
    </subcellularLocation>
</comment>
<comment type="similarity">
    <text evidence="1">Belongs to the ABC transporter superfamily. Sulfate/tungstate importer (TC 3.A.1.6) family.</text>
</comment>
<sequence length="357" mass="40113">MSITIQNLNKHFGNFHALKNINLNVPTGKLVSLLGPSGCGKTTLLRIIAGLENADGGKILFDGQDVTAKHVRERKVGFVFQHYALFRHMNVFDNVAFGLTVLPKSERPSKGQIRAKVEELLKLVQLSHLAKSYPHQLSGGQRQRIALARALAVEPKLLLLDEPFGALDAKVRKELRTWLRDIHHNLGVTSILVTHDQEEALEVSDEIVVMNHGKIEQTGSAEAIYRKPENAFVTEFLGETDAFEGRIEKGFWHYNGFAWKLDAQYKWQEQTATGYIRPHEWQIAAEHETPMICAEIEKVHAVGALTHILVKHGKQDVHITLAGSDAARYPIAEGKELNLIPKQVYVFSQNELIEYSI</sequence>
<reference key="1">
    <citation type="journal article" date="2000" name="Nature">
        <title>Complete DNA sequence of a serogroup A strain of Neisseria meningitidis Z2491.</title>
        <authorList>
            <person name="Parkhill J."/>
            <person name="Achtman M."/>
            <person name="James K.D."/>
            <person name="Bentley S.D."/>
            <person name="Churcher C.M."/>
            <person name="Klee S.R."/>
            <person name="Morelli G."/>
            <person name="Basham D."/>
            <person name="Brown D."/>
            <person name="Chillingworth T."/>
            <person name="Davies R.M."/>
            <person name="Davis P."/>
            <person name="Devlin K."/>
            <person name="Feltwell T."/>
            <person name="Hamlin N."/>
            <person name="Holroyd S."/>
            <person name="Jagels K."/>
            <person name="Leather S."/>
            <person name="Moule S."/>
            <person name="Mungall K.L."/>
            <person name="Quail M.A."/>
            <person name="Rajandream M.A."/>
            <person name="Rutherford K.M."/>
            <person name="Simmonds M."/>
            <person name="Skelton J."/>
            <person name="Whitehead S."/>
            <person name="Spratt B.G."/>
            <person name="Barrell B.G."/>
        </authorList>
    </citation>
    <scope>NUCLEOTIDE SEQUENCE [LARGE SCALE GENOMIC DNA]</scope>
    <source>
        <strain>DSM 15465 / Z2491</strain>
    </source>
</reference>
<keyword id="KW-0067">ATP-binding</keyword>
<keyword id="KW-0997">Cell inner membrane</keyword>
<keyword id="KW-1003">Cell membrane</keyword>
<keyword id="KW-0472">Membrane</keyword>
<keyword id="KW-0547">Nucleotide-binding</keyword>
<keyword id="KW-0764">Sulfate transport</keyword>
<keyword id="KW-1278">Translocase</keyword>
<keyword id="KW-0813">Transport</keyword>
<protein>
    <recommendedName>
        <fullName evidence="1">Sulfate/thiosulfate import ATP-binding protein CysA</fullName>
        <ecNumber evidence="1">7.3.2.3</ecNumber>
    </recommendedName>
    <alternativeName>
        <fullName evidence="1">Sulfate-transporting ATPase</fullName>
    </alternativeName>
</protein>
<proteinExistence type="inferred from homology"/>
<name>CYSA_NEIMA</name>
<evidence type="ECO:0000255" key="1">
    <source>
        <dbReference type="HAMAP-Rule" id="MF_01701"/>
    </source>
</evidence>
<gene>
    <name evidence="1" type="primary">cysA</name>
    <name type="ordered locus">NMA1097</name>
</gene>
<accession>Q9JUX4</accession>
<accession>A1IRC2</accession>
<organism>
    <name type="scientific">Neisseria meningitidis serogroup A / serotype 4A (strain DSM 15465 / Z2491)</name>
    <dbReference type="NCBI Taxonomy" id="122587"/>
    <lineage>
        <taxon>Bacteria</taxon>
        <taxon>Pseudomonadati</taxon>
        <taxon>Pseudomonadota</taxon>
        <taxon>Betaproteobacteria</taxon>
        <taxon>Neisseriales</taxon>
        <taxon>Neisseriaceae</taxon>
        <taxon>Neisseria</taxon>
    </lineage>
</organism>